<feature type="initiator methionine" description="Removed" evidence="2">
    <location>
        <position position="1"/>
    </location>
</feature>
<feature type="chain" id="PRO_0000438879" description="Probable peptidoglycan D,D-transpeptidase PbpC">
    <location>
        <begin position="2"/>
        <end position="565"/>
    </location>
</feature>
<feature type="transmembrane region" description="Helical" evidence="1">
    <location>
        <begin position="10"/>
        <end position="30"/>
    </location>
</feature>
<feature type="active site" description="Acyl-ester intermediate" evidence="1">
    <location>
        <position position="289"/>
    </location>
</feature>
<reference key="1">
    <citation type="journal article" date="2000" name="Nature">
        <title>Complete genome sequence of Pseudomonas aeruginosa PAO1, an opportunistic pathogen.</title>
        <authorList>
            <person name="Stover C.K."/>
            <person name="Pham X.-Q.T."/>
            <person name="Erwin A.L."/>
            <person name="Mizoguchi S.D."/>
            <person name="Warrener P."/>
            <person name="Hickey M.J."/>
            <person name="Brinkman F.S.L."/>
            <person name="Hufnagle W.O."/>
            <person name="Kowalik D.J."/>
            <person name="Lagrou M."/>
            <person name="Garber R.L."/>
            <person name="Goltry L."/>
            <person name="Tolentino E."/>
            <person name="Westbrock-Wadman S."/>
            <person name="Yuan Y."/>
            <person name="Brody L.L."/>
            <person name="Coulter S.N."/>
            <person name="Folger K.R."/>
            <person name="Kas A."/>
            <person name="Larbig K."/>
            <person name="Lim R.M."/>
            <person name="Smith K.A."/>
            <person name="Spencer D.H."/>
            <person name="Wong G.K.-S."/>
            <person name="Wu Z."/>
            <person name="Paulsen I.T."/>
            <person name="Reizer J."/>
            <person name="Saier M.H. Jr."/>
            <person name="Hancock R.E.W."/>
            <person name="Lory S."/>
            <person name="Olson M.V."/>
        </authorList>
    </citation>
    <scope>NUCLEOTIDE SEQUENCE [LARGE SCALE GENOMIC DNA]</scope>
    <source>
        <strain>ATCC 15692 / DSM 22644 / CIP 104116 / JCM 14847 / LMG 12228 / 1C / PRS 101 / PAO1</strain>
    </source>
</reference>
<reference key="2">
    <citation type="journal article" date="1997" name="J. Bacteriol.">
        <title>Identification of a penicillin-binding protein 3 homolog, PBP3x, in Pseudomonas aeruginosa: gene cloning and growth phase-dependent expression.</title>
        <authorList>
            <person name="Liao X."/>
            <person name="Hancock R.E.W."/>
        </authorList>
    </citation>
    <scope>PROTEIN SEQUENCE OF 2-7</scope>
    <scope>PENICILLIN-BINDING</scope>
    <scope>SUBCELLULAR LOCATION</scope>
    <scope>INDUCTION</scope>
    <scope>DISRUPTION PHENOTYPE</scope>
    <source>
        <strain>ATCC 15692 / DSM 22644 / CIP 104116 / JCM 14847 / LMG 12228 / 1C / PRS 101 / PAO1</strain>
    </source>
</reference>
<name>FTSI2_PSEAE</name>
<protein>
    <recommendedName>
        <fullName evidence="4">Probable peptidoglycan D,D-transpeptidase PbpC</fullName>
        <ecNumber evidence="1">3.4.16.4</ecNumber>
    </recommendedName>
    <alternativeName>
        <fullName evidence="3">PBP3x</fullName>
    </alternativeName>
    <alternativeName>
        <fullName evidence="3">Penicillin-binding protein 3 homolog</fullName>
        <shortName evidence="3">PBP3 homolog</shortName>
    </alternativeName>
</protein>
<sequence>MSSQRRNYRFILVVTLFVLASLAVSGRLVYLQVHDHEFLADQGDLRSIRDLPIPVTRGMITDRNGEPLAVSTEVASIWCNPREMAAHLDEVPRLAGALHRPAAALLAQLQANPNKRFLYLERGLSPIEASEVMALGITGVHQIKEYKRFYPSSELTAQLIGLVNIDGRGQEGTELGFNDWLSGKDGVREVAINPRGSLVNSIKVLKTPKASQDVALSIDLRLQFIAYKALEKAVLKFGAHSGSAVLVNPKSGQILAMANFPSYNPNNRASFAPAFMRNRTLTDTFEPGSVIKPFSMSAALASGKFDENSQVSVAPGWMTIDGHTIHDVARRDVLTMTGVLINSSNIGMSKVALQIGPKPILEQLGRVGFGAPLSLGFPGENPGYLPFHEKWSNIATASMSFGYSLAVNTAELAQAYSVFANDGKLVPLSLLRDNPQNQVRQAMDPQIARRIRAMLQTVVEDPKGVVRARVPGYHVAGKSGTARKASGRGYADKSYRSLFVGMAPASDPQLVLAVMIDSPTRIGYFGGLVSAPTFSDIMAGSLRALAIPPDNLQDSPAVADRQHHG</sequence>
<proteinExistence type="evidence at protein level"/>
<keyword id="KW-0121">Carboxypeptidase</keyword>
<keyword id="KW-0131">Cell cycle</keyword>
<keyword id="KW-0132">Cell division</keyword>
<keyword id="KW-0997">Cell inner membrane</keyword>
<keyword id="KW-1003">Cell membrane</keyword>
<keyword id="KW-0133">Cell shape</keyword>
<keyword id="KW-0961">Cell wall biogenesis/degradation</keyword>
<keyword id="KW-0903">Direct protein sequencing</keyword>
<keyword id="KW-0378">Hydrolase</keyword>
<keyword id="KW-0472">Membrane</keyword>
<keyword id="KW-0573">Peptidoglycan synthesis</keyword>
<keyword id="KW-0645">Protease</keyword>
<keyword id="KW-1185">Reference proteome</keyword>
<keyword id="KW-0717">Septation</keyword>
<keyword id="KW-0812">Transmembrane</keyword>
<keyword id="KW-1133">Transmembrane helix</keyword>
<accession>Q9I1K1</accession>
<gene>
    <name evidence="3" type="primary">pbpC</name>
    <name evidence="5" type="ordered locus">PA2272</name>
</gene>
<organism>
    <name type="scientific">Pseudomonas aeruginosa (strain ATCC 15692 / DSM 22644 / CIP 104116 / JCM 14847 / LMG 12228 / 1C / PRS 101 / PAO1)</name>
    <dbReference type="NCBI Taxonomy" id="208964"/>
    <lineage>
        <taxon>Bacteria</taxon>
        <taxon>Pseudomonadati</taxon>
        <taxon>Pseudomonadota</taxon>
        <taxon>Gammaproteobacteria</taxon>
        <taxon>Pseudomonadales</taxon>
        <taxon>Pseudomonadaceae</taxon>
        <taxon>Pseudomonas</taxon>
    </lineage>
</organism>
<comment type="function">
    <text evidence="1 2">Catalyzes cross-linking of the peptidoglycan cell wall at the division septum (By similarity). Binds penicillin (PubMed:9045804).</text>
</comment>
<comment type="catalytic activity">
    <reaction evidence="1">
        <text>Preferential cleavage: (Ac)2-L-Lys-D-Ala-|-D-Ala. Also transpeptidation of peptidyl-alanyl moieties that are N-acyl substituents of D-alanine.</text>
        <dbReference type="EC" id="3.4.16.4"/>
    </reaction>
</comment>
<comment type="pathway">
    <text evidence="1">Cell wall biogenesis; peptidoglycan biosynthesis.</text>
</comment>
<comment type="subcellular location">
    <subcellularLocation>
        <location evidence="1 2">Cell inner membrane</location>
        <topology evidence="1">Single-pass membrane protein</topology>
    </subcellularLocation>
</comment>
<comment type="induction">
    <text evidence="2">Produced in the stationary phase of growth.</text>
</comment>
<comment type="disruption phenotype">
    <text evidence="2">Inactivation causes no changes in the cell morphology or growth rate of exponentially growing cells.</text>
</comment>
<comment type="similarity">
    <text evidence="1">Belongs to the transpeptidase family. FtsI subfamily.</text>
</comment>
<dbReference type="EC" id="3.4.16.4" evidence="1"/>
<dbReference type="EMBL" id="AE004091">
    <property type="protein sequence ID" value="AAG05660.1"/>
    <property type="molecule type" value="Genomic_DNA"/>
</dbReference>
<dbReference type="PIR" id="A83361">
    <property type="entry name" value="A83361"/>
</dbReference>
<dbReference type="RefSeq" id="NP_250962.1">
    <property type="nucleotide sequence ID" value="NC_002516.2"/>
</dbReference>
<dbReference type="RefSeq" id="WP_003113747.1">
    <property type="nucleotide sequence ID" value="NZ_QZGE01000014.1"/>
</dbReference>
<dbReference type="SMR" id="Q9I1K1"/>
<dbReference type="FunCoup" id="Q9I1K1">
    <property type="interactions" value="242"/>
</dbReference>
<dbReference type="STRING" id="208964.PA2272"/>
<dbReference type="PaxDb" id="208964-PA2272"/>
<dbReference type="DNASU" id="882173"/>
<dbReference type="GeneID" id="882173"/>
<dbReference type="KEGG" id="pae:PA2272"/>
<dbReference type="PATRIC" id="fig|208964.12.peg.2374"/>
<dbReference type="PseudoCAP" id="PA2272"/>
<dbReference type="HOGENOM" id="CLU_009289_6_2_6"/>
<dbReference type="InParanoid" id="Q9I1K1"/>
<dbReference type="OrthoDB" id="9789078at2"/>
<dbReference type="PhylomeDB" id="Q9I1K1"/>
<dbReference type="BioCyc" id="PAER208964:G1FZ6-2311-MONOMER"/>
<dbReference type="UniPathway" id="UPA00219"/>
<dbReference type="Proteomes" id="UP000002438">
    <property type="component" value="Chromosome"/>
</dbReference>
<dbReference type="GO" id="GO:0005886">
    <property type="term" value="C:plasma membrane"/>
    <property type="evidence" value="ECO:0000318"/>
    <property type="project" value="GO_Central"/>
</dbReference>
<dbReference type="GO" id="GO:0008658">
    <property type="term" value="F:penicillin binding"/>
    <property type="evidence" value="ECO:0000318"/>
    <property type="project" value="GO_Central"/>
</dbReference>
<dbReference type="GO" id="GO:0008955">
    <property type="term" value="F:peptidoglycan glycosyltransferase activity"/>
    <property type="evidence" value="ECO:0007669"/>
    <property type="project" value="InterPro"/>
</dbReference>
<dbReference type="GO" id="GO:0009002">
    <property type="term" value="F:serine-type D-Ala-D-Ala carboxypeptidase activity"/>
    <property type="evidence" value="ECO:0007669"/>
    <property type="project" value="UniProtKB-UniRule"/>
</dbReference>
<dbReference type="GO" id="GO:0071555">
    <property type="term" value="P:cell wall organization"/>
    <property type="evidence" value="ECO:0000318"/>
    <property type="project" value="GO_Central"/>
</dbReference>
<dbReference type="GO" id="GO:0000917">
    <property type="term" value="P:division septum assembly"/>
    <property type="evidence" value="ECO:0007669"/>
    <property type="project" value="UniProtKB-KW"/>
</dbReference>
<dbReference type="GO" id="GO:0043093">
    <property type="term" value="P:FtsZ-dependent cytokinesis"/>
    <property type="evidence" value="ECO:0007669"/>
    <property type="project" value="UniProtKB-UniRule"/>
</dbReference>
<dbReference type="GO" id="GO:0009252">
    <property type="term" value="P:peptidoglycan biosynthetic process"/>
    <property type="evidence" value="ECO:0007669"/>
    <property type="project" value="UniProtKB-UniRule"/>
</dbReference>
<dbReference type="GO" id="GO:0006508">
    <property type="term" value="P:proteolysis"/>
    <property type="evidence" value="ECO:0007669"/>
    <property type="project" value="UniProtKB-KW"/>
</dbReference>
<dbReference type="GO" id="GO:0008360">
    <property type="term" value="P:regulation of cell shape"/>
    <property type="evidence" value="ECO:0007669"/>
    <property type="project" value="UniProtKB-KW"/>
</dbReference>
<dbReference type="Gene3D" id="1.10.150.770">
    <property type="match status" value="1"/>
</dbReference>
<dbReference type="Gene3D" id="3.30.450.330">
    <property type="match status" value="1"/>
</dbReference>
<dbReference type="Gene3D" id="3.40.710.10">
    <property type="entry name" value="DD-peptidase/beta-lactamase superfamily"/>
    <property type="match status" value="1"/>
</dbReference>
<dbReference type="Gene3D" id="3.90.1310.10">
    <property type="entry name" value="Penicillin-binding protein 2a (Domain 2)"/>
    <property type="match status" value="1"/>
</dbReference>
<dbReference type="HAMAP" id="MF_02080">
    <property type="entry name" value="FtsI_transpept"/>
    <property type="match status" value="1"/>
</dbReference>
<dbReference type="InterPro" id="IPR050515">
    <property type="entry name" value="Bact_Transpept/Beta-Lactamase"/>
</dbReference>
<dbReference type="InterPro" id="IPR012338">
    <property type="entry name" value="Beta-lactam/transpept-like"/>
</dbReference>
<dbReference type="InterPro" id="IPR037532">
    <property type="entry name" value="FtsI_transpept"/>
</dbReference>
<dbReference type="InterPro" id="IPR005311">
    <property type="entry name" value="PBP_dimer"/>
</dbReference>
<dbReference type="InterPro" id="IPR036138">
    <property type="entry name" value="PBP_dimer_sf"/>
</dbReference>
<dbReference type="InterPro" id="IPR001460">
    <property type="entry name" value="PCN-bd_Tpept"/>
</dbReference>
<dbReference type="PANTHER" id="PTHR30627">
    <property type="entry name" value="PEPTIDOGLYCAN D,D-TRANSPEPTIDASE"/>
    <property type="match status" value="1"/>
</dbReference>
<dbReference type="PANTHER" id="PTHR30627:SF1">
    <property type="entry name" value="PEPTIDOGLYCAN D,D-TRANSPEPTIDASE FTSI"/>
    <property type="match status" value="1"/>
</dbReference>
<dbReference type="Pfam" id="PF03717">
    <property type="entry name" value="PBP_dimer"/>
    <property type="match status" value="1"/>
</dbReference>
<dbReference type="Pfam" id="PF00905">
    <property type="entry name" value="Transpeptidase"/>
    <property type="match status" value="1"/>
</dbReference>
<dbReference type="SUPFAM" id="SSF56601">
    <property type="entry name" value="beta-lactamase/transpeptidase-like"/>
    <property type="match status" value="1"/>
</dbReference>
<dbReference type="SUPFAM" id="SSF56519">
    <property type="entry name" value="Penicillin binding protein dimerisation domain"/>
    <property type="match status" value="1"/>
</dbReference>
<evidence type="ECO:0000255" key="1">
    <source>
        <dbReference type="HAMAP-Rule" id="MF_02080"/>
    </source>
</evidence>
<evidence type="ECO:0000269" key="2">
    <source>
    </source>
</evidence>
<evidence type="ECO:0000303" key="3">
    <source>
    </source>
</evidence>
<evidence type="ECO:0000305" key="4"/>
<evidence type="ECO:0000312" key="5">
    <source>
        <dbReference type="EMBL" id="AAG05660.1"/>
    </source>
</evidence>